<gene>
    <name type="primary">acyP</name>
    <name type="ordered locus">Tpen_1052</name>
</gene>
<dbReference type="EC" id="3.6.1.7"/>
<dbReference type="EMBL" id="CP000505">
    <property type="protein sequence ID" value="ABL78452.1"/>
    <property type="molecule type" value="Genomic_DNA"/>
</dbReference>
<dbReference type="RefSeq" id="WP_011752717.1">
    <property type="nucleotide sequence ID" value="NC_008698.1"/>
</dbReference>
<dbReference type="SMR" id="A1RZ22"/>
<dbReference type="STRING" id="368408.Tpen_1052"/>
<dbReference type="EnsemblBacteria" id="ABL78452">
    <property type="protein sequence ID" value="ABL78452"/>
    <property type="gene ID" value="Tpen_1052"/>
</dbReference>
<dbReference type="GeneID" id="4600795"/>
<dbReference type="KEGG" id="tpe:Tpen_1052"/>
<dbReference type="eggNOG" id="arCOG01674">
    <property type="taxonomic scope" value="Archaea"/>
</dbReference>
<dbReference type="HOGENOM" id="CLU_141932_3_2_2"/>
<dbReference type="OrthoDB" id="6643at2157"/>
<dbReference type="Proteomes" id="UP000000641">
    <property type="component" value="Chromosome"/>
</dbReference>
<dbReference type="GO" id="GO:0003998">
    <property type="term" value="F:acylphosphatase activity"/>
    <property type="evidence" value="ECO:0007669"/>
    <property type="project" value="UniProtKB-EC"/>
</dbReference>
<dbReference type="FunFam" id="3.30.70.100:FF:000012">
    <property type="entry name" value="Acylphosphatase"/>
    <property type="match status" value="1"/>
</dbReference>
<dbReference type="Gene3D" id="3.30.70.100">
    <property type="match status" value="1"/>
</dbReference>
<dbReference type="InterPro" id="IPR020456">
    <property type="entry name" value="Acylphosphatase"/>
</dbReference>
<dbReference type="InterPro" id="IPR001792">
    <property type="entry name" value="Acylphosphatase-like_dom"/>
</dbReference>
<dbReference type="InterPro" id="IPR036046">
    <property type="entry name" value="Acylphosphatase-like_dom_sf"/>
</dbReference>
<dbReference type="InterPro" id="IPR017968">
    <property type="entry name" value="Acylphosphatase_CS"/>
</dbReference>
<dbReference type="NCBIfam" id="NF011016">
    <property type="entry name" value="PRK14444.1"/>
    <property type="match status" value="1"/>
</dbReference>
<dbReference type="PANTHER" id="PTHR47268">
    <property type="entry name" value="ACYLPHOSPHATASE"/>
    <property type="match status" value="1"/>
</dbReference>
<dbReference type="PANTHER" id="PTHR47268:SF4">
    <property type="entry name" value="ACYLPHOSPHATASE"/>
    <property type="match status" value="1"/>
</dbReference>
<dbReference type="Pfam" id="PF00708">
    <property type="entry name" value="Acylphosphatase"/>
    <property type="match status" value="1"/>
</dbReference>
<dbReference type="PRINTS" id="PR00112">
    <property type="entry name" value="ACYLPHPHTASE"/>
</dbReference>
<dbReference type="SUPFAM" id="SSF54975">
    <property type="entry name" value="Acylphosphatase/BLUF domain-like"/>
    <property type="match status" value="1"/>
</dbReference>
<dbReference type="PROSITE" id="PS00150">
    <property type="entry name" value="ACYLPHOSPHATASE_1"/>
    <property type="match status" value="1"/>
</dbReference>
<dbReference type="PROSITE" id="PS00151">
    <property type="entry name" value="ACYLPHOSPHATASE_2"/>
    <property type="match status" value="1"/>
</dbReference>
<dbReference type="PROSITE" id="PS51160">
    <property type="entry name" value="ACYLPHOSPHATASE_3"/>
    <property type="match status" value="1"/>
</dbReference>
<reference key="1">
    <citation type="journal article" date="2008" name="J. Bacteriol.">
        <title>Genome sequence of Thermofilum pendens reveals an exceptional loss of biosynthetic pathways without genome reduction.</title>
        <authorList>
            <person name="Anderson I."/>
            <person name="Rodriguez J."/>
            <person name="Susanti D."/>
            <person name="Porat I."/>
            <person name="Reich C."/>
            <person name="Ulrich L.E."/>
            <person name="Elkins J.G."/>
            <person name="Mavromatis K."/>
            <person name="Lykidis A."/>
            <person name="Kim E."/>
            <person name="Thompson L.S."/>
            <person name="Nolan M."/>
            <person name="Land M."/>
            <person name="Copeland A."/>
            <person name="Lapidus A."/>
            <person name="Lucas S."/>
            <person name="Detter C."/>
            <person name="Zhulin I.B."/>
            <person name="Olsen G.J."/>
            <person name="Whitman W."/>
            <person name="Mukhopadhyay B."/>
            <person name="Bristow J."/>
            <person name="Kyrpides N."/>
        </authorList>
    </citation>
    <scope>NUCLEOTIDE SEQUENCE [LARGE SCALE GENOMIC DNA]</scope>
    <source>
        <strain>DSM 2475 / Hrk 5</strain>
    </source>
</reference>
<accession>A1RZ22</accession>
<sequence>MRAHIYVSGLVQGVFFRASMQEVARSLGVNGWVRNLPDGRVEAVLEGEEGAVLKVIEWARRGPPLARVERVDVEWEEYRGEFRDFYIKYR</sequence>
<protein>
    <recommendedName>
        <fullName>Acylphosphatase</fullName>
        <ecNumber>3.6.1.7</ecNumber>
    </recommendedName>
    <alternativeName>
        <fullName>Acylphosphate phosphohydrolase</fullName>
    </alternativeName>
</protein>
<evidence type="ECO:0000255" key="1">
    <source>
        <dbReference type="PROSITE-ProRule" id="PRU00520"/>
    </source>
</evidence>
<evidence type="ECO:0000305" key="2"/>
<name>ACYP_THEPD</name>
<organism>
    <name type="scientific">Thermofilum pendens (strain DSM 2475 / Hrk 5)</name>
    <dbReference type="NCBI Taxonomy" id="368408"/>
    <lineage>
        <taxon>Archaea</taxon>
        <taxon>Thermoproteota</taxon>
        <taxon>Thermoprotei</taxon>
        <taxon>Thermofilales</taxon>
        <taxon>Thermofilaceae</taxon>
        <taxon>Thermofilum</taxon>
    </lineage>
</organism>
<proteinExistence type="inferred from homology"/>
<keyword id="KW-0378">Hydrolase</keyword>
<keyword id="KW-1185">Reference proteome</keyword>
<feature type="chain" id="PRO_0000326872" description="Acylphosphatase">
    <location>
        <begin position="1"/>
        <end position="90"/>
    </location>
</feature>
<feature type="domain" description="Acylphosphatase-like" evidence="1">
    <location>
        <begin position="2"/>
        <end position="89"/>
    </location>
</feature>
<feature type="active site" evidence="1">
    <location>
        <position position="17"/>
    </location>
</feature>
<feature type="active site" evidence="1">
    <location>
        <position position="35"/>
    </location>
</feature>
<comment type="catalytic activity">
    <reaction>
        <text>an acyl phosphate + H2O = a carboxylate + phosphate + H(+)</text>
        <dbReference type="Rhea" id="RHEA:14965"/>
        <dbReference type="ChEBI" id="CHEBI:15377"/>
        <dbReference type="ChEBI" id="CHEBI:15378"/>
        <dbReference type="ChEBI" id="CHEBI:29067"/>
        <dbReference type="ChEBI" id="CHEBI:43474"/>
        <dbReference type="ChEBI" id="CHEBI:59918"/>
        <dbReference type="EC" id="3.6.1.7"/>
    </reaction>
</comment>
<comment type="similarity">
    <text evidence="2">Belongs to the acylphosphatase family.</text>
</comment>